<protein>
    <recommendedName>
        <fullName>NADH-ubiquinone oxidoreductase chain 4</fullName>
        <ecNumber>7.1.1.2</ecNumber>
    </recommendedName>
    <alternativeName>
        <fullName>NADH dehydrogenase subunit 4</fullName>
    </alternativeName>
</protein>
<evidence type="ECO:0000250" key="1"/>
<evidence type="ECO:0000255" key="2"/>
<evidence type="ECO:0000305" key="3"/>
<reference key="1">
    <citation type="journal article" date="1998" name="Nucleic Acids Res.">
        <title>Complete sequence of the amphioxus (Branchiostoma lanceolatum) mitochondrial genome: relations to vertebrates.</title>
        <authorList>
            <person name="Spruyt N."/>
            <person name="Delarbre C."/>
            <person name="Gachelin G."/>
            <person name="Laudet V."/>
        </authorList>
    </citation>
    <scope>NUCLEOTIDE SEQUENCE [GENOMIC DNA]</scope>
</reference>
<organism>
    <name type="scientific">Branchiostoma lanceolatum</name>
    <name type="common">Common lancelet</name>
    <name type="synonym">Amphioxus lanceolatum</name>
    <dbReference type="NCBI Taxonomy" id="7740"/>
    <lineage>
        <taxon>Eukaryota</taxon>
        <taxon>Metazoa</taxon>
        <taxon>Chordata</taxon>
        <taxon>Cephalochordata</taxon>
        <taxon>Leptocardii</taxon>
        <taxon>Amphioxiformes</taxon>
        <taxon>Branchiostomatidae</taxon>
        <taxon>Branchiostoma</taxon>
    </lineage>
</organism>
<proteinExistence type="inferred from homology"/>
<geneLocation type="mitochondrion"/>
<name>NU4M_BRALA</name>
<gene>
    <name type="primary">ND4</name>
    <name type="synonym">NAD4</name>
    <name type="synonym">NADH4</name>
</gene>
<feature type="chain" id="PRO_0000117909" description="NADH-ubiquinone oxidoreductase chain 4">
    <location>
        <begin position="1"/>
        <end position="452"/>
    </location>
</feature>
<feature type="transmembrane region" description="Helical" evidence="2">
    <location>
        <begin position="4"/>
        <end position="24"/>
    </location>
</feature>
<feature type="transmembrane region" description="Helical" evidence="2">
    <location>
        <begin position="29"/>
        <end position="49"/>
    </location>
</feature>
<feature type="transmembrane region" description="Helical" evidence="2">
    <location>
        <begin position="59"/>
        <end position="79"/>
    </location>
</feature>
<feature type="transmembrane region" description="Helical" evidence="2">
    <location>
        <begin position="88"/>
        <end position="110"/>
    </location>
</feature>
<feature type="transmembrane region" description="Helical" evidence="2">
    <location>
        <begin position="114"/>
        <end position="136"/>
    </location>
</feature>
<feature type="transmembrane region" description="Helical" evidence="2">
    <location>
        <begin position="144"/>
        <end position="164"/>
    </location>
</feature>
<feature type="transmembrane region" description="Helical" evidence="2">
    <location>
        <begin position="182"/>
        <end position="202"/>
    </location>
</feature>
<feature type="transmembrane region" description="Helical" evidence="2">
    <location>
        <begin position="221"/>
        <end position="241"/>
    </location>
</feature>
<feature type="transmembrane region" description="Helical" evidence="2">
    <location>
        <begin position="252"/>
        <end position="272"/>
    </location>
</feature>
<feature type="transmembrane region" description="Helical" evidence="2">
    <location>
        <begin position="282"/>
        <end position="304"/>
    </location>
</feature>
<feature type="transmembrane region" description="Helical" evidence="2">
    <location>
        <begin position="309"/>
        <end position="331"/>
    </location>
</feature>
<feature type="transmembrane region" description="Helical" evidence="2">
    <location>
        <begin position="345"/>
        <end position="365"/>
    </location>
</feature>
<feature type="transmembrane region" description="Helical" evidence="2">
    <location>
        <begin position="390"/>
        <end position="410"/>
    </location>
</feature>
<feature type="transmembrane region" description="Helical" evidence="2">
    <location>
        <begin position="432"/>
        <end position="452"/>
    </location>
</feature>
<accession>O79421</accession>
<sequence length="452" mass="49940">MNHLVLGYVGLVIGVIVTKKSMVWRVGQVGSVLLMLPATVLVNMNMTISNVSYMMTSDFVSLGLTVLSIWLLPLMLLASQQHMVSESLIYQRVFVGCQVFLTGALVLAFMASDLLLFYIAFESTLLPTLMLITRWGAQKERYQAGTYFMFFTLVGSLPLLICLIGQYQMVGSLALDLSYEGVFQLSYLVNFWWVGCILAFLVKLPLYGVHLWLPKAHVEAPIAGSMVLAGVLLKLGGYGMMRVSLMWGATAMLSSEVFLALALWGIVVMGGICLRQTDLKSLIAYSSVGHMALVVGGVLTGVAWGYNGAMVLMIAHGLVSSCLFCLANLWYERSSTRNLSGSRGLIMIFPLISLGWFLMSLMNMALPPAINLFGELVAMVALYNWSPYSIVYMSLGAVLTAAYSLYLFGMSQWGNTMKNYKNLYTITSREYLLTTLHLVPAIYLIFYLGLMF</sequence>
<dbReference type="EC" id="7.1.1.2"/>
<dbReference type="EMBL" id="Y16474">
    <property type="protein sequence ID" value="CAA76256.1"/>
    <property type="molecule type" value="Genomic_DNA"/>
</dbReference>
<dbReference type="PIR" id="C71391">
    <property type="entry name" value="C71391"/>
</dbReference>
<dbReference type="RefSeq" id="NP_007546.1">
    <property type="nucleotide sequence ID" value="NC_001912.1"/>
</dbReference>
<dbReference type="SMR" id="O79421"/>
<dbReference type="GeneID" id="808213"/>
<dbReference type="CTD" id="4538"/>
<dbReference type="GO" id="GO:0031966">
    <property type="term" value="C:mitochondrial membrane"/>
    <property type="evidence" value="ECO:0007669"/>
    <property type="project" value="UniProtKB-SubCell"/>
</dbReference>
<dbReference type="GO" id="GO:0008137">
    <property type="term" value="F:NADH dehydrogenase (ubiquinone) activity"/>
    <property type="evidence" value="ECO:0007669"/>
    <property type="project" value="UniProtKB-EC"/>
</dbReference>
<dbReference type="GO" id="GO:0048039">
    <property type="term" value="F:ubiquinone binding"/>
    <property type="evidence" value="ECO:0007669"/>
    <property type="project" value="TreeGrafter"/>
</dbReference>
<dbReference type="GO" id="GO:0042773">
    <property type="term" value="P:ATP synthesis coupled electron transport"/>
    <property type="evidence" value="ECO:0007669"/>
    <property type="project" value="InterPro"/>
</dbReference>
<dbReference type="GO" id="GO:0015990">
    <property type="term" value="P:electron transport coupled proton transport"/>
    <property type="evidence" value="ECO:0007669"/>
    <property type="project" value="TreeGrafter"/>
</dbReference>
<dbReference type="InterPro" id="IPR000260">
    <property type="entry name" value="NADH4_N"/>
</dbReference>
<dbReference type="InterPro" id="IPR003918">
    <property type="entry name" value="NADH_UbQ_OxRdtase"/>
</dbReference>
<dbReference type="InterPro" id="IPR001750">
    <property type="entry name" value="ND/Mrp_TM"/>
</dbReference>
<dbReference type="PANTHER" id="PTHR43507">
    <property type="entry name" value="NADH-UBIQUINONE OXIDOREDUCTASE CHAIN 4"/>
    <property type="match status" value="1"/>
</dbReference>
<dbReference type="PANTHER" id="PTHR43507:SF20">
    <property type="entry name" value="NADH-UBIQUINONE OXIDOREDUCTASE CHAIN 4"/>
    <property type="match status" value="1"/>
</dbReference>
<dbReference type="Pfam" id="PF01059">
    <property type="entry name" value="Oxidored_q5_N"/>
    <property type="match status" value="1"/>
</dbReference>
<dbReference type="Pfam" id="PF00361">
    <property type="entry name" value="Proton_antipo_M"/>
    <property type="match status" value="1"/>
</dbReference>
<dbReference type="PRINTS" id="PR01437">
    <property type="entry name" value="NUOXDRDTASE4"/>
</dbReference>
<comment type="function">
    <text evidence="1">Core subunit of the mitochondrial membrane respiratory chain NADH dehydrogenase (Complex I) that is believed to belong to the minimal assembly required for catalysis. Complex I functions in the transfer of electrons from NADH to the respiratory chain. The immediate electron acceptor for the enzyme is believed to be ubiquinone (By similarity).</text>
</comment>
<comment type="catalytic activity">
    <reaction>
        <text>a ubiquinone + NADH + 5 H(+)(in) = a ubiquinol + NAD(+) + 4 H(+)(out)</text>
        <dbReference type="Rhea" id="RHEA:29091"/>
        <dbReference type="Rhea" id="RHEA-COMP:9565"/>
        <dbReference type="Rhea" id="RHEA-COMP:9566"/>
        <dbReference type="ChEBI" id="CHEBI:15378"/>
        <dbReference type="ChEBI" id="CHEBI:16389"/>
        <dbReference type="ChEBI" id="CHEBI:17976"/>
        <dbReference type="ChEBI" id="CHEBI:57540"/>
        <dbReference type="ChEBI" id="CHEBI:57945"/>
        <dbReference type="EC" id="7.1.1.2"/>
    </reaction>
</comment>
<comment type="subcellular location">
    <subcellularLocation>
        <location evidence="1">Mitochondrion membrane</location>
        <topology evidence="1">Multi-pass membrane protein</topology>
    </subcellularLocation>
</comment>
<comment type="similarity">
    <text evidence="3">Belongs to the complex I subunit 4 family.</text>
</comment>
<keyword id="KW-0249">Electron transport</keyword>
<keyword id="KW-0472">Membrane</keyword>
<keyword id="KW-0496">Mitochondrion</keyword>
<keyword id="KW-0520">NAD</keyword>
<keyword id="KW-0679">Respiratory chain</keyword>
<keyword id="KW-1278">Translocase</keyword>
<keyword id="KW-0812">Transmembrane</keyword>
<keyword id="KW-1133">Transmembrane helix</keyword>
<keyword id="KW-0813">Transport</keyword>
<keyword id="KW-0830">Ubiquinone</keyword>